<reference key="1">
    <citation type="journal article" date="2003" name="Nature">
        <title>Unique physiological and pathogenic features of Leptospira interrogans revealed by whole-genome sequencing.</title>
        <authorList>
            <person name="Ren S.-X."/>
            <person name="Fu G."/>
            <person name="Jiang X.-G."/>
            <person name="Zeng R."/>
            <person name="Miao Y.-G."/>
            <person name="Xu H."/>
            <person name="Zhang Y.-X."/>
            <person name="Xiong H."/>
            <person name="Lu G."/>
            <person name="Lu L.-F."/>
            <person name="Jiang H.-Q."/>
            <person name="Jia J."/>
            <person name="Tu Y.-F."/>
            <person name="Jiang J.-X."/>
            <person name="Gu W.-Y."/>
            <person name="Zhang Y.-Q."/>
            <person name="Cai Z."/>
            <person name="Sheng H.-H."/>
            <person name="Yin H.-F."/>
            <person name="Zhang Y."/>
            <person name="Zhu G.-F."/>
            <person name="Wan M."/>
            <person name="Huang H.-L."/>
            <person name="Qian Z."/>
            <person name="Wang S.-Y."/>
            <person name="Ma W."/>
            <person name="Yao Z.-J."/>
            <person name="Shen Y."/>
            <person name="Qiang B.-Q."/>
            <person name="Xia Q.-C."/>
            <person name="Guo X.-K."/>
            <person name="Danchin A."/>
            <person name="Saint Girons I."/>
            <person name="Somerville R.L."/>
            <person name="Wen Y.-M."/>
            <person name="Shi M.-H."/>
            <person name="Chen Z."/>
            <person name="Xu J.-G."/>
            <person name="Zhao G.-P."/>
        </authorList>
    </citation>
    <scope>NUCLEOTIDE SEQUENCE [LARGE SCALE GENOMIC DNA]</scope>
    <source>
        <strain>56601</strain>
    </source>
</reference>
<evidence type="ECO:0000255" key="1">
    <source>
        <dbReference type="HAMAP-Rule" id="MF_01701"/>
    </source>
</evidence>
<gene>
    <name evidence="1" type="primary">cysA</name>
    <name type="ordered locus">LA_1158</name>
</gene>
<protein>
    <recommendedName>
        <fullName evidence="1">Sulfate/thiosulfate import ATP-binding protein CysA</fullName>
        <ecNumber evidence="1">7.3.2.3</ecNumber>
    </recommendedName>
    <alternativeName>
        <fullName evidence="1">Sulfate-transporting ATPase</fullName>
    </alternativeName>
</protein>
<organism>
    <name type="scientific">Leptospira interrogans serogroup Icterohaemorrhagiae serovar Lai (strain 56601)</name>
    <dbReference type="NCBI Taxonomy" id="189518"/>
    <lineage>
        <taxon>Bacteria</taxon>
        <taxon>Pseudomonadati</taxon>
        <taxon>Spirochaetota</taxon>
        <taxon>Spirochaetia</taxon>
        <taxon>Leptospirales</taxon>
        <taxon>Leptospiraceae</taxon>
        <taxon>Leptospira</taxon>
    </lineage>
</organism>
<feature type="chain" id="PRO_0000092271" description="Sulfate/thiosulfate import ATP-binding protein CysA">
    <location>
        <begin position="1"/>
        <end position="356"/>
    </location>
</feature>
<feature type="domain" description="ABC transporter" evidence="1">
    <location>
        <begin position="3"/>
        <end position="237"/>
    </location>
</feature>
<feature type="binding site" evidence="1">
    <location>
        <begin position="35"/>
        <end position="42"/>
    </location>
    <ligand>
        <name>ATP</name>
        <dbReference type="ChEBI" id="CHEBI:30616"/>
    </ligand>
</feature>
<dbReference type="EC" id="7.3.2.3" evidence="1"/>
<dbReference type="EMBL" id="AE010300">
    <property type="protein sequence ID" value="AAN48357.2"/>
    <property type="molecule type" value="Genomic_DNA"/>
</dbReference>
<dbReference type="RefSeq" id="NP_711339.2">
    <property type="nucleotide sequence ID" value="NC_004342.2"/>
</dbReference>
<dbReference type="RefSeq" id="WP_000510777.1">
    <property type="nucleotide sequence ID" value="NC_004342.2"/>
</dbReference>
<dbReference type="SMR" id="Q8F6Z1"/>
<dbReference type="FunCoup" id="Q8F6Z1">
    <property type="interactions" value="143"/>
</dbReference>
<dbReference type="STRING" id="189518.LA_1158"/>
<dbReference type="PaxDb" id="189518-LA_1158"/>
<dbReference type="EnsemblBacteria" id="AAN48357">
    <property type="protein sequence ID" value="AAN48357"/>
    <property type="gene ID" value="LA_1158"/>
</dbReference>
<dbReference type="KEGG" id="lil:LA_1158"/>
<dbReference type="PATRIC" id="fig|189518.3.peg.1154"/>
<dbReference type="HOGENOM" id="CLU_000604_1_1_12"/>
<dbReference type="InParanoid" id="Q8F6Z1"/>
<dbReference type="OrthoDB" id="9802264at2"/>
<dbReference type="Proteomes" id="UP000001408">
    <property type="component" value="Chromosome I"/>
</dbReference>
<dbReference type="GO" id="GO:0043190">
    <property type="term" value="C:ATP-binding cassette (ABC) transporter complex"/>
    <property type="evidence" value="ECO:0007669"/>
    <property type="project" value="InterPro"/>
</dbReference>
<dbReference type="GO" id="GO:0015419">
    <property type="term" value="F:ABC-type sulfate transporter activity"/>
    <property type="evidence" value="ECO:0007669"/>
    <property type="project" value="InterPro"/>
</dbReference>
<dbReference type="GO" id="GO:0102025">
    <property type="term" value="F:ABC-type thiosulfate transporter activity"/>
    <property type="evidence" value="ECO:0007669"/>
    <property type="project" value="RHEA"/>
</dbReference>
<dbReference type="GO" id="GO:0005524">
    <property type="term" value="F:ATP binding"/>
    <property type="evidence" value="ECO:0007669"/>
    <property type="project" value="UniProtKB-KW"/>
</dbReference>
<dbReference type="GO" id="GO:0016887">
    <property type="term" value="F:ATP hydrolysis activity"/>
    <property type="evidence" value="ECO:0007669"/>
    <property type="project" value="InterPro"/>
</dbReference>
<dbReference type="GO" id="GO:1902358">
    <property type="term" value="P:sulfate transmembrane transport"/>
    <property type="evidence" value="ECO:0000318"/>
    <property type="project" value="GO_Central"/>
</dbReference>
<dbReference type="CDD" id="cd03296">
    <property type="entry name" value="ABC_CysA_sulfate_importer"/>
    <property type="match status" value="1"/>
</dbReference>
<dbReference type="FunFam" id="3.40.50.300:FF:000227">
    <property type="entry name" value="Sulfate/thiosulfate import ATP-binding protein CysA"/>
    <property type="match status" value="1"/>
</dbReference>
<dbReference type="Gene3D" id="2.40.50.100">
    <property type="match status" value="1"/>
</dbReference>
<dbReference type="Gene3D" id="3.40.50.300">
    <property type="entry name" value="P-loop containing nucleotide triphosphate hydrolases"/>
    <property type="match status" value="1"/>
</dbReference>
<dbReference type="InterPro" id="IPR003593">
    <property type="entry name" value="AAA+_ATPase"/>
</dbReference>
<dbReference type="InterPro" id="IPR050093">
    <property type="entry name" value="ABC_SmlMolc_Importer"/>
</dbReference>
<dbReference type="InterPro" id="IPR003439">
    <property type="entry name" value="ABC_transporter-like_ATP-bd"/>
</dbReference>
<dbReference type="InterPro" id="IPR017871">
    <property type="entry name" value="ABC_transporter-like_CS"/>
</dbReference>
<dbReference type="InterPro" id="IPR041193">
    <property type="entry name" value="CysA_C"/>
</dbReference>
<dbReference type="InterPro" id="IPR008995">
    <property type="entry name" value="Mo/tungstate-bd_C_term_dom"/>
</dbReference>
<dbReference type="InterPro" id="IPR027417">
    <property type="entry name" value="P-loop_NTPase"/>
</dbReference>
<dbReference type="InterPro" id="IPR005666">
    <property type="entry name" value="Sulph_transpt1"/>
</dbReference>
<dbReference type="InterPro" id="IPR024765">
    <property type="entry name" value="TOBE-like"/>
</dbReference>
<dbReference type="NCBIfam" id="TIGR00968">
    <property type="entry name" value="3a0106s01"/>
    <property type="match status" value="1"/>
</dbReference>
<dbReference type="PANTHER" id="PTHR42781">
    <property type="entry name" value="SPERMIDINE/PUTRESCINE IMPORT ATP-BINDING PROTEIN POTA"/>
    <property type="match status" value="1"/>
</dbReference>
<dbReference type="PANTHER" id="PTHR42781:SF4">
    <property type="entry name" value="SPERMIDINE_PUTRESCINE IMPORT ATP-BINDING PROTEIN POTA"/>
    <property type="match status" value="1"/>
</dbReference>
<dbReference type="Pfam" id="PF00005">
    <property type="entry name" value="ABC_tran"/>
    <property type="match status" value="1"/>
</dbReference>
<dbReference type="Pfam" id="PF17850">
    <property type="entry name" value="CysA_C_terminal"/>
    <property type="match status" value="1"/>
</dbReference>
<dbReference type="Pfam" id="PF12857">
    <property type="entry name" value="TOBE_3"/>
    <property type="match status" value="1"/>
</dbReference>
<dbReference type="SMART" id="SM00382">
    <property type="entry name" value="AAA"/>
    <property type="match status" value="1"/>
</dbReference>
<dbReference type="SUPFAM" id="SSF50331">
    <property type="entry name" value="MOP-like"/>
    <property type="match status" value="1"/>
</dbReference>
<dbReference type="SUPFAM" id="SSF52540">
    <property type="entry name" value="P-loop containing nucleoside triphosphate hydrolases"/>
    <property type="match status" value="1"/>
</dbReference>
<dbReference type="PROSITE" id="PS00211">
    <property type="entry name" value="ABC_TRANSPORTER_1"/>
    <property type="match status" value="1"/>
</dbReference>
<dbReference type="PROSITE" id="PS50893">
    <property type="entry name" value="ABC_TRANSPORTER_2"/>
    <property type="match status" value="1"/>
</dbReference>
<dbReference type="PROSITE" id="PS51237">
    <property type="entry name" value="CYSA"/>
    <property type="match status" value="1"/>
</dbReference>
<accession>Q8F6Z1</accession>
<comment type="function">
    <text evidence="1">Part of the ABC transporter complex CysAWTP involved in sulfate/thiosulfate import. Responsible for energy coupling to the transport system.</text>
</comment>
<comment type="catalytic activity">
    <reaction evidence="1">
        <text>sulfate(out) + ATP + H2O = sulfate(in) + ADP + phosphate + H(+)</text>
        <dbReference type="Rhea" id="RHEA:10192"/>
        <dbReference type="ChEBI" id="CHEBI:15377"/>
        <dbReference type="ChEBI" id="CHEBI:15378"/>
        <dbReference type="ChEBI" id="CHEBI:16189"/>
        <dbReference type="ChEBI" id="CHEBI:30616"/>
        <dbReference type="ChEBI" id="CHEBI:43474"/>
        <dbReference type="ChEBI" id="CHEBI:456216"/>
        <dbReference type="EC" id="7.3.2.3"/>
    </reaction>
</comment>
<comment type="catalytic activity">
    <reaction evidence="1">
        <text>thiosulfate(out) + ATP + H2O = thiosulfate(in) + ADP + phosphate + H(+)</text>
        <dbReference type="Rhea" id="RHEA:29871"/>
        <dbReference type="ChEBI" id="CHEBI:15377"/>
        <dbReference type="ChEBI" id="CHEBI:15378"/>
        <dbReference type="ChEBI" id="CHEBI:30616"/>
        <dbReference type="ChEBI" id="CHEBI:33542"/>
        <dbReference type="ChEBI" id="CHEBI:43474"/>
        <dbReference type="ChEBI" id="CHEBI:456216"/>
        <dbReference type="EC" id="7.3.2.3"/>
    </reaction>
</comment>
<comment type="subunit">
    <text evidence="1">The complex is composed of two ATP-binding proteins (CysA), two transmembrane proteins (CysT and CysW) and a solute-binding protein (CysP).</text>
</comment>
<comment type="subcellular location">
    <subcellularLocation>
        <location evidence="1">Cell inner membrane</location>
        <topology evidence="1">Peripheral membrane protein</topology>
    </subcellularLocation>
</comment>
<comment type="similarity">
    <text evidence="1">Belongs to the ABC transporter superfamily. Sulfate/tungstate importer (TC 3.A.1.6) family.</text>
</comment>
<name>CYSA_LEPIN</name>
<keyword id="KW-0067">ATP-binding</keyword>
<keyword id="KW-0997">Cell inner membrane</keyword>
<keyword id="KW-1003">Cell membrane</keyword>
<keyword id="KW-0472">Membrane</keyword>
<keyword id="KW-0547">Nucleotide-binding</keyword>
<keyword id="KW-1185">Reference proteome</keyword>
<keyword id="KW-0764">Sulfate transport</keyword>
<keyword id="KW-1278">Translocase</keyword>
<keyword id="KW-0813">Transport</keyword>
<sequence>MGIEVKNLVKRFGNFTAIDDLSLDVPSGELVALLGPSGSGKTTLLRIIAGLEDADKGQVIFEGREVGKKNAKDRGVGFVFQHYALFRHMTIFENIAFGLEVRKRSERPSKDTIRDKVMSLLKLVQLENFYNRYPSELSGGQRQRIALARALAIEPRFLLLDEPFGALDAKVRKELRNWLRRLHDEIHITSVFVTHDQEEALEVSDKVVILRSGKIEQVGTPDEVYNHPKNSFVFHFLGDVNLFHGRVQGGQTQLGEIKVDTPEHSEIENASAVGYVRPYDVEILREPIEAQTIPAEIQYIHSTGRNVKIDLKRLDTGTILESQLNSSEFQSLNLLPGETVHIRFKKIKVYVEDYTI</sequence>
<proteinExistence type="inferred from homology"/>